<dbReference type="EC" id="2.7.1.30" evidence="1"/>
<dbReference type="EMBL" id="CP000560">
    <property type="protein sequence ID" value="ABS73319.1"/>
    <property type="molecule type" value="Genomic_DNA"/>
</dbReference>
<dbReference type="RefSeq" id="WP_007610291.1">
    <property type="nucleotide sequence ID" value="NC_009725.2"/>
</dbReference>
<dbReference type="SMR" id="A7Z2U3"/>
<dbReference type="GeneID" id="93080090"/>
<dbReference type="KEGG" id="bay:RBAM_009550"/>
<dbReference type="HOGENOM" id="CLU_009281_2_3_9"/>
<dbReference type="UniPathway" id="UPA00618">
    <property type="reaction ID" value="UER00672"/>
</dbReference>
<dbReference type="Proteomes" id="UP000001120">
    <property type="component" value="Chromosome"/>
</dbReference>
<dbReference type="GO" id="GO:0005829">
    <property type="term" value="C:cytosol"/>
    <property type="evidence" value="ECO:0007669"/>
    <property type="project" value="TreeGrafter"/>
</dbReference>
<dbReference type="GO" id="GO:0005524">
    <property type="term" value="F:ATP binding"/>
    <property type="evidence" value="ECO:0007669"/>
    <property type="project" value="UniProtKB-UniRule"/>
</dbReference>
<dbReference type="GO" id="GO:0004370">
    <property type="term" value="F:glycerol kinase activity"/>
    <property type="evidence" value="ECO:0000250"/>
    <property type="project" value="UniProtKB"/>
</dbReference>
<dbReference type="GO" id="GO:0019563">
    <property type="term" value="P:glycerol catabolic process"/>
    <property type="evidence" value="ECO:0007669"/>
    <property type="project" value="UniProtKB-UniRule"/>
</dbReference>
<dbReference type="GO" id="GO:0006071">
    <property type="term" value="P:glycerol metabolic process"/>
    <property type="evidence" value="ECO:0000250"/>
    <property type="project" value="UniProtKB"/>
</dbReference>
<dbReference type="GO" id="GO:0006072">
    <property type="term" value="P:glycerol-3-phosphate metabolic process"/>
    <property type="evidence" value="ECO:0007669"/>
    <property type="project" value="InterPro"/>
</dbReference>
<dbReference type="CDD" id="cd07786">
    <property type="entry name" value="FGGY_EcGK_like"/>
    <property type="match status" value="1"/>
</dbReference>
<dbReference type="FunFam" id="3.30.420.40:FF:000007">
    <property type="entry name" value="Glycerol kinase"/>
    <property type="match status" value="1"/>
</dbReference>
<dbReference type="FunFam" id="3.30.420.40:FF:000008">
    <property type="entry name" value="Glycerol kinase"/>
    <property type="match status" value="1"/>
</dbReference>
<dbReference type="Gene3D" id="3.30.420.40">
    <property type="match status" value="2"/>
</dbReference>
<dbReference type="HAMAP" id="MF_00186">
    <property type="entry name" value="Glycerol_kin"/>
    <property type="match status" value="1"/>
</dbReference>
<dbReference type="InterPro" id="IPR043129">
    <property type="entry name" value="ATPase_NBD"/>
</dbReference>
<dbReference type="InterPro" id="IPR000577">
    <property type="entry name" value="Carb_kinase_FGGY"/>
</dbReference>
<dbReference type="InterPro" id="IPR018483">
    <property type="entry name" value="Carb_kinase_FGGY_CS"/>
</dbReference>
<dbReference type="InterPro" id="IPR018485">
    <property type="entry name" value="FGGY_C"/>
</dbReference>
<dbReference type="InterPro" id="IPR018484">
    <property type="entry name" value="FGGY_N"/>
</dbReference>
<dbReference type="InterPro" id="IPR005999">
    <property type="entry name" value="Glycerol_kin"/>
</dbReference>
<dbReference type="NCBIfam" id="TIGR01311">
    <property type="entry name" value="glycerol_kin"/>
    <property type="match status" value="1"/>
</dbReference>
<dbReference type="NCBIfam" id="NF000756">
    <property type="entry name" value="PRK00047.1"/>
    <property type="match status" value="1"/>
</dbReference>
<dbReference type="PANTHER" id="PTHR10196:SF69">
    <property type="entry name" value="GLYCEROL KINASE"/>
    <property type="match status" value="1"/>
</dbReference>
<dbReference type="PANTHER" id="PTHR10196">
    <property type="entry name" value="SUGAR KINASE"/>
    <property type="match status" value="1"/>
</dbReference>
<dbReference type="Pfam" id="PF02782">
    <property type="entry name" value="FGGY_C"/>
    <property type="match status" value="1"/>
</dbReference>
<dbReference type="Pfam" id="PF00370">
    <property type="entry name" value="FGGY_N"/>
    <property type="match status" value="1"/>
</dbReference>
<dbReference type="PIRSF" id="PIRSF000538">
    <property type="entry name" value="GlpK"/>
    <property type="match status" value="1"/>
</dbReference>
<dbReference type="SUPFAM" id="SSF53067">
    <property type="entry name" value="Actin-like ATPase domain"/>
    <property type="match status" value="2"/>
</dbReference>
<dbReference type="PROSITE" id="PS00933">
    <property type="entry name" value="FGGY_KINASES_1"/>
    <property type="match status" value="1"/>
</dbReference>
<dbReference type="PROSITE" id="PS00445">
    <property type="entry name" value="FGGY_KINASES_2"/>
    <property type="match status" value="1"/>
</dbReference>
<reference key="1">
    <citation type="journal article" date="2007" name="Nat. Biotechnol.">
        <title>Comparative analysis of the complete genome sequence of the plant growth-promoting bacterium Bacillus amyloliquefaciens FZB42.</title>
        <authorList>
            <person name="Chen X.H."/>
            <person name="Koumoutsi A."/>
            <person name="Scholz R."/>
            <person name="Eisenreich A."/>
            <person name="Schneider K."/>
            <person name="Heinemeyer I."/>
            <person name="Morgenstern B."/>
            <person name="Voss B."/>
            <person name="Hess W.R."/>
            <person name="Reva O."/>
            <person name="Junge H."/>
            <person name="Voigt B."/>
            <person name="Jungblut P.R."/>
            <person name="Vater J."/>
            <person name="Suessmuth R."/>
            <person name="Liesegang H."/>
            <person name="Strittmatter A."/>
            <person name="Gottschalk G."/>
            <person name="Borriss R."/>
        </authorList>
    </citation>
    <scope>NUCLEOTIDE SEQUENCE [LARGE SCALE GENOMIC DNA]</scope>
    <source>
        <strain>DSM 23117 / BGSC 10A6 / LMG 26770 / FZB42</strain>
    </source>
</reference>
<feature type="chain" id="PRO_1000020697" description="Glycerol kinase">
    <location>
        <begin position="1"/>
        <end position="496"/>
    </location>
</feature>
<feature type="binding site" evidence="1">
    <location>
        <position position="12"/>
    </location>
    <ligand>
        <name>ADP</name>
        <dbReference type="ChEBI" id="CHEBI:456216"/>
    </ligand>
</feature>
<feature type="binding site" evidence="1">
    <location>
        <position position="12"/>
    </location>
    <ligand>
        <name>ATP</name>
        <dbReference type="ChEBI" id="CHEBI:30616"/>
    </ligand>
</feature>
<feature type="binding site" evidence="1">
    <location>
        <position position="12"/>
    </location>
    <ligand>
        <name>sn-glycerol 3-phosphate</name>
        <dbReference type="ChEBI" id="CHEBI:57597"/>
    </ligand>
</feature>
<feature type="binding site" evidence="1">
    <location>
        <position position="13"/>
    </location>
    <ligand>
        <name>ATP</name>
        <dbReference type="ChEBI" id="CHEBI:30616"/>
    </ligand>
</feature>
<feature type="binding site" evidence="1">
    <location>
        <position position="14"/>
    </location>
    <ligand>
        <name>ATP</name>
        <dbReference type="ChEBI" id="CHEBI:30616"/>
    </ligand>
</feature>
<feature type="binding site" evidence="1">
    <location>
        <position position="16"/>
    </location>
    <ligand>
        <name>ADP</name>
        <dbReference type="ChEBI" id="CHEBI:456216"/>
    </ligand>
</feature>
<feature type="binding site" evidence="1">
    <location>
        <position position="82"/>
    </location>
    <ligand>
        <name>glycerol</name>
        <dbReference type="ChEBI" id="CHEBI:17754"/>
    </ligand>
</feature>
<feature type="binding site" evidence="1">
    <location>
        <position position="82"/>
    </location>
    <ligand>
        <name>sn-glycerol 3-phosphate</name>
        <dbReference type="ChEBI" id="CHEBI:57597"/>
    </ligand>
</feature>
<feature type="binding site" evidence="1">
    <location>
        <position position="83"/>
    </location>
    <ligand>
        <name>glycerol</name>
        <dbReference type="ChEBI" id="CHEBI:17754"/>
    </ligand>
</feature>
<feature type="binding site" evidence="1">
    <location>
        <position position="83"/>
    </location>
    <ligand>
        <name>sn-glycerol 3-phosphate</name>
        <dbReference type="ChEBI" id="CHEBI:57597"/>
    </ligand>
</feature>
<feature type="binding site" evidence="1">
    <location>
        <position position="134"/>
    </location>
    <ligand>
        <name>glycerol</name>
        <dbReference type="ChEBI" id="CHEBI:17754"/>
    </ligand>
</feature>
<feature type="binding site" evidence="1">
    <location>
        <position position="134"/>
    </location>
    <ligand>
        <name>sn-glycerol 3-phosphate</name>
        <dbReference type="ChEBI" id="CHEBI:57597"/>
    </ligand>
</feature>
<feature type="binding site" evidence="1">
    <location>
        <position position="244"/>
    </location>
    <ligand>
        <name>glycerol</name>
        <dbReference type="ChEBI" id="CHEBI:17754"/>
    </ligand>
</feature>
<feature type="binding site" evidence="1">
    <location>
        <position position="244"/>
    </location>
    <ligand>
        <name>sn-glycerol 3-phosphate</name>
        <dbReference type="ChEBI" id="CHEBI:57597"/>
    </ligand>
</feature>
<feature type="binding site" evidence="1">
    <location>
        <position position="245"/>
    </location>
    <ligand>
        <name>glycerol</name>
        <dbReference type="ChEBI" id="CHEBI:17754"/>
    </ligand>
</feature>
<feature type="binding site" evidence="1">
    <location>
        <position position="266"/>
    </location>
    <ligand>
        <name>ADP</name>
        <dbReference type="ChEBI" id="CHEBI:456216"/>
    </ligand>
</feature>
<feature type="binding site" evidence="1">
    <location>
        <position position="266"/>
    </location>
    <ligand>
        <name>ATP</name>
        <dbReference type="ChEBI" id="CHEBI:30616"/>
    </ligand>
</feature>
<feature type="binding site" evidence="1">
    <location>
        <position position="309"/>
    </location>
    <ligand>
        <name>ADP</name>
        <dbReference type="ChEBI" id="CHEBI:456216"/>
    </ligand>
</feature>
<feature type="binding site" evidence="1">
    <location>
        <position position="309"/>
    </location>
    <ligand>
        <name>ATP</name>
        <dbReference type="ChEBI" id="CHEBI:30616"/>
    </ligand>
</feature>
<feature type="binding site" evidence="1">
    <location>
        <position position="313"/>
    </location>
    <ligand>
        <name>ATP</name>
        <dbReference type="ChEBI" id="CHEBI:30616"/>
    </ligand>
</feature>
<feature type="binding site" evidence="1">
    <location>
        <position position="410"/>
    </location>
    <ligand>
        <name>ADP</name>
        <dbReference type="ChEBI" id="CHEBI:456216"/>
    </ligand>
</feature>
<feature type="binding site" evidence="1">
    <location>
        <position position="410"/>
    </location>
    <ligand>
        <name>ATP</name>
        <dbReference type="ChEBI" id="CHEBI:30616"/>
    </ligand>
</feature>
<feature type="binding site" evidence="1">
    <location>
        <position position="414"/>
    </location>
    <ligand>
        <name>ADP</name>
        <dbReference type="ChEBI" id="CHEBI:456216"/>
    </ligand>
</feature>
<feature type="modified residue" description="Phosphohistidine; by HPr" evidence="1">
    <location>
        <position position="230"/>
    </location>
</feature>
<protein>
    <recommendedName>
        <fullName evidence="1">Glycerol kinase</fullName>
        <ecNumber evidence="1">2.7.1.30</ecNumber>
    </recommendedName>
    <alternativeName>
        <fullName evidence="1">ATP:glycerol 3-phosphotransferase</fullName>
    </alternativeName>
    <alternativeName>
        <fullName evidence="1">Glycerokinase</fullName>
        <shortName evidence="1">GK</shortName>
    </alternativeName>
</protein>
<name>GLPK_BACVZ</name>
<keyword id="KW-0067">ATP-binding</keyword>
<keyword id="KW-0319">Glycerol metabolism</keyword>
<keyword id="KW-0418">Kinase</keyword>
<keyword id="KW-0547">Nucleotide-binding</keyword>
<keyword id="KW-0597">Phosphoprotein</keyword>
<keyword id="KW-0808">Transferase</keyword>
<comment type="function">
    <text evidence="1">Key enzyme in the regulation of glycerol uptake and metabolism. Catalyzes the phosphorylation of glycerol to yield sn-glycerol 3-phosphate.</text>
</comment>
<comment type="catalytic activity">
    <reaction evidence="1">
        <text>glycerol + ATP = sn-glycerol 3-phosphate + ADP + H(+)</text>
        <dbReference type="Rhea" id="RHEA:21644"/>
        <dbReference type="ChEBI" id="CHEBI:15378"/>
        <dbReference type="ChEBI" id="CHEBI:17754"/>
        <dbReference type="ChEBI" id="CHEBI:30616"/>
        <dbReference type="ChEBI" id="CHEBI:57597"/>
        <dbReference type="ChEBI" id="CHEBI:456216"/>
        <dbReference type="EC" id="2.7.1.30"/>
    </reaction>
</comment>
<comment type="activity regulation">
    <text evidence="1">Activated by phosphorylation and inhibited by fructose 1,6-bisphosphate (FBP).</text>
</comment>
<comment type="pathway">
    <text evidence="1">Polyol metabolism; glycerol degradation via glycerol kinase pathway; sn-glycerol 3-phosphate from glycerol: step 1/1.</text>
</comment>
<comment type="subunit">
    <text evidence="1">Homotetramer and homodimer (in equilibrium).</text>
</comment>
<comment type="PTM">
    <text evidence="1">The phosphoenolpyruvate-dependent sugar phosphotransferase system (PTS), including enzyme I, and histidine-containing protein (HPr) are required for the phosphorylation, which leads to the activation of the enzyme.</text>
</comment>
<comment type="similarity">
    <text evidence="1">Belongs to the FGGY kinase family.</text>
</comment>
<proteinExistence type="inferred from homology"/>
<accession>A7Z2U3</accession>
<gene>
    <name evidence="1" type="primary">glpK</name>
    <name type="ordered locus">RBAM_009550</name>
</gene>
<organism>
    <name type="scientific">Bacillus velezensis (strain DSM 23117 / BGSC 10A6 / LMG 26770 / FZB42)</name>
    <name type="common">Bacillus amyloliquefaciens subsp. plantarum</name>
    <dbReference type="NCBI Taxonomy" id="326423"/>
    <lineage>
        <taxon>Bacteria</taxon>
        <taxon>Bacillati</taxon>
        <taxon>Bacillota</taxon>
        <taxon>Bacilli</taxon>
        <taxon>Bacillales</taxon>
        <taxon>Bacillaceae</taxon>
        <taxon>Bacillus</taxon>
        <taxon>Bacillus amyloliquefaciens group</taxon>
    </lineage>
</organism>
<evidence type="ECO:0000255" key="1">
    <source>
        <dbReference type="HAMAP-Rule" id="MF_00186"/>
    </source>
</evidence>
<sequence>METYILSIDQGTTSSRAILFNKEGKIVHSAQKEFTQHFPQPGWVEHNANEIWGSVLAVIATVISESGISADQIAGIGITNQRETTVVWDKDTGKPVYNAIVWQSRQTSGICEELREKGYNDTFREKTGLLIDPYFSGTKVKWILDNVEGAREKAENGNLLFGTIDSWLIWKMSGGAAHVTDYSNASRTLMFNIHELKWDDELLDILGVPKSMLPEVKPSSHVYAKTVDYHFFGKNIPIAGAAGDQQSALFGQACFEEGMGKNTYGTGCFMLMNTGEKAITSDHGLLTTIAWGLDGKVEYALEGSIFVAGSAIQWLRDGMRMFQDSKESETYAERVDSADGVYVVPAFVGLGTPYWDSDVRGSVFGLTRGTTKEHFIRATLESLAYQAKDVLDAMEADSGISLKTLRVDGGAVKNNFLMQFQSDLLDVPVERPEINETTALGAAYLAGIAVGYWKDSTEIADQWNLDKQFKPEMEDEKRDELYGGWKKAVNAAMAFK</sequence>